<proteinExistence type="inferred from homology"/>
<feature type="chain" id="PRO_1000185975" description="3-ketoacyl-CoA thiolase">
    <location>
        <begin position="1"/>
        <end position="436"/>
    </location>
</feature>
<feature type="active site" description="Acyl-thioester intermediate" evidence="1">
    <location>
        <position position="99"/>
    </location>
</feature>
<feature type="active site" description="Proton acceptor" evidence="1">
    <location>
        <position position="392"/>
    </location>
</feature>
<feature type="active site" description="Proton acceptor" evidence="1">
    <location>
        <position position="422"/>
    </location>
</feature>
<protein>
    <recommendedName>
        <fullName evidence="1">3-ketoacyl-CoA thiolase</fullName>
        <ecNumber evidence="1">2.3.1.16</ecNumber>
    </recommendedName>
    <alternativeName>
        <fullName evidence="1">ACSs</fullName>
    </alternativeName>
    <alternativeName>
        <fullName evidence="1">Acetyl-CoA acyltransferase</fullName>
    </alternativeName>
    <alternativeName>
        <fullName evidence="1">Acyl-CoA ligase</fullName>
    </alternativeName>
    <alternativeName>
        <fullName evidence="1">Beta-ketothiolase</fullName>
    </alternativeName>
    <alternativeName>
        <fullName evidence="1">Fatty acid oxidation complex subunit beta</fullName>
    </alternativeName>
</protein>
<accession>B4SZR1</accession>
<keyword id="KW-0012">Acyltransferase</keyword>
<keyword id="KW-0963">Cytoplasm</keyword>
<keyword id="KW-0276">Fatty acid metabolism</keyword>
<keyword id="KW-0442">Lipid degradation</keyword>
<keyword id="KW-0443">Lipid metabolism</keyword>
<keyword id="KW-0808">Transferase</keyword>
<sequence length="436" mass="46506">MRQALPLVTRQGDRIAIVSGLRTPFARQATAFHGIPAVDLGKMVVGELLARSEIPADAIEQLVFGQVVQMPEAPNIAREIVLGTGMNVHTDAYSVSRACATSFQAVANVAESLMAGTIRAGIAGGADSSSVLPIGVSKALARVLVDVNKARTTRQRLTLFSRLRLRDLLPVPPAVAEYSTGLRMGDTAEQMAKTYGITREQQDALAHRSHQRAAQAWAEGKLAEEVMTTYVPPYKNPFAEDNNIRGTSTLADYAKLRPAFDRKHGSVTAANSTPLTDGAAAVILMTESRAKELGLHPLGYLRSYAFTAIDVWQDMLLGPAWSTPLALERAGLTMADLTLFDMHEAFAAQTLANLQLLGSERFAREVLGRAQATGEVDDAKFNVLGGSIAYGHPFAATGARMITQTLHELRRRGGGFGLVTACAAGGLGAAMVLEAK</sequence>
<comment type="function">
    <text evidence="1">Catalyzes the final step of fatty acid oxidation in which acetyl-CoA is released and the CoA ester of a fatty acid two carbons shorter is formed.</text>
</comment>
<comment type="catalytic activity">
    <reaction evidence="1">
        <text>an acyl-CoA + acetyl-CoA = a 3-oxoacyl-CoA + CoA</text>
        <dbReference type="Rhea" id="RHEA:21564"/>
        <dbReference type="ChEBI" id="CHEBI:57287"/>
        <dbReference type="ChEBI" id="CHEBI:57288"/>
        <dbReference type="ChEBI" id="CHEBI:58342"/>
        <dbReference type="ChEBI" id="CHEBI:90726"/>
        <dbReference type="EC" id="2.3.1.16"/>
    </reaction>
</comment>
<comment type="pathway">
    <text evidence="1">Lipid metabolism; fatty acid beta-oxidation.</text>
</comment>
<comment type="subunit">
    <text evidence="1">Heterotetramer of two alpha chains (FadJ) and two beta chains (FadI).</text>
</comment>
<comment type="subcellular location">
    <subcellularLocation>
        <location evidence="1">Cytoplasm</location>
    </subcellularLocation>
</comment>
<comment type="similarity">
    <text evidence="1">Belongs to the thiolase-like superfamily. Thiolase family.</text>
</comment>
<dbReference type="EC" id="2.3.1.16" evidence="1"/>
<dbReference type="EMBL" id="CP001113">
    <property type="protein sequence ID" value="ACF62399.1"/>
    <property type="molecule type" value="Genomic_DNA"/>
</dbReference>
<dbReference type="RefSeq" id="WP_001248131.1">
    <property type="nucleotide sequence ID" value="NZ_CCMR01000001.1"/>
</dbReference>
<dbReference type="SMR" id="B4SZR1"/>
<dbReference type="KEGG" id="see:SNSL254_A2578"/>
<dbReference type="HOGENOM" id="CLU_031026_2_0_6"/>
<dbReference type="UniPathway" id="UPA00659"/>
<dbReference type="Proteomes" id="UP000008824">
    <property type="component" value="Chromosome"/>
</dbReference>
<dbReference type="GO" id="GO:0005829">
    <property type="term" value="C:cytosol"/>
    <property type="evidence" value="ECO:0007669"/>
    <property type="project" value="TreeGrafter"/>
</dbReference>
<dbReference type="GO" id="GO:0003988">
    <property type="term" value="F:acetyl-CoA C-acyltransferase activity"/>
    <property type="evidence" value="ECO:0007669"/>
    <property type="project" value="UniProtKB-UniRule"/>
</dbReference>
<dbReference type="GO" id="GO:0006635">
    <property type="term" value="P:fatty acid beta-oxidation"/>
    <property type="evidence" value="ECO:0007669"/>
    <property type="project" value="UniProtKB-UniRule"/>
</dbReference>
<dbReference type="CDD" id="cd00751">
    <property type="entry name" value="thiolase"/>
    <property type="match status" value="1"/>
</dbReference>
<dbReference type="FunFam" id="3.40.47.10:FF:000011">
    <property type="entry name" value="3-ketoacyl-CoA thiolase"/>
    <property type="match status" value="1"/>
</dbReference>
<dbReference type="Gene3D" id="3.40.47.10">
    <property type="match status" value="1"/>
</dbReference>
<dbReference type="HAMAP" id="MF_01618">
    <property type="entry name" value="FadI"/>
    <property type="match status" value="1"/>
</dbReference>
<dbReference type="InterPro" id="IPR012806">
    <property type="entry name" value="Ac-CoA_C-AcTrfase_FadI"/>
</dbReference>
<dbReference type="InterPro" id="IPR002155">
    <property type="entry name" value="Thiolase"/>
</dbReference>
<dbReference type="InterPro" id="IPR016039">
    <property type="entry name" value="Thiolase-like"/>
</dbReference>
<dbReference type="InterPro" id="IPR020615">
    <property type="entry name" value="Thiolase_acyl_enz_int_AS"/>
</dbReference>
<dbReference type="InterPro" id="IPR020610">
    <property type="entry name" value="Thiolase_AS"/>
</dbReference>
<dbReference type="InterPro" id="IPR020617">
    <property type="entry name" value="Thiolase_C"/>
</dbReference>
<dbReference type="InterPro" id="IPR020613">
    <property type="entry name" value="Thiolase_CS"/>
</dbReference>
<dbReference type="InterPro" id="IPR020616">
    <property type="entry name" value="Thiolase_N"/>
</dbReference>
<dbReference type="NCBIfam" id="TIGR01930">
    <property type="entry name" value="AcCoA-C-Actrans"/>
    <property type="match status" value="1"/>
</dbReference>
<dbReference type="NCBIfam" id="TIGR02446">
    <property type="entry name" value="FadI"/>
    <property type="match status" value="1"/>
</dbReference>
<dbReference type="NCBIfam" id="NF006516">
    <property type="entry name" value="PRK08963.1"/>
    <property type="match status" value="1"/>
</dbReference>
<dbReference type="PANTHER" id="PTHR18919:SF107">
    <property type="entry name" value="ACETYL-COA ACETYLTRANSFERASE, CYTOSOLIC"/>
    <property type="match status" value="1"/>
</dbReference>
<dbReference type="PANTHER" id="PTHR18919">
    <property type="entry name" value="ACETYL-COA C-ACYLTRANSFERASE"/>
    <property type="match status" value="1"/>
</dbReference>
<dbReference type="Pfam" id="PF02803">
    <property type="entry name" value="Thiolase_C"/>
    <property type="match status" value="1"/>
</dbReference>
<dbReference type="Pfam" id="PF00108">
    <property type="entry name" value="Thiolase_N"/>
    <property type="match status" value="1"/>
</dbReference>
<dbReference type="PIRSF" id="PIRSF000429">
    <property type="entry name" value="Ac-CoA_Ac_transf"/>
    <property type="match status" value="1"/>
</dbReference>
<dbReference type="SUPFAM" id="SSF53901">
    <property type="entry name" value="Thiolase-like"/>
    <property type="match status" value="2"/>
</dbReference>
<dbReference type="PROSITE" id="PS00098">
    <property type="entry name" value="THIOLASE_1"/>
    <property type="match status" value="1"/>
</dbReference>
<dbReference type="PROSITE" id="PS00737">
    <property type="entry name" value="THIOLASE_2"/>
    <property type="match status" value="1"/>
</dbReference>
<dbReference type="PROSITE" id="PS00099">
    <property type="entry name" value="THIOLASE_3"/>
    <property type="match status" value="1"/>
</dbReference>
<gene>
    <name evidence="1" type="primary">fadI</name>
    <name type="ordered locus">SNSL254_A2578</name>
</gene>
<reference key="1">
    <citation type="journal article" date="2011" name="J. Bacteriol.">
        <title>Comparative genomics of 28 Salmonella enterica isolates: evidence for CRISPR-mediated adaptive sublineage evolution.</title>
        <authorList>
            <person name="Fricke W.F."/>
            <person name="Mammel M.K."/>
            <person name="McDermott P.F."/>
            <person name="Tartera C."/>
            <person name="White D.G."/>
            <person name="Leclerc J.E."/>
            <person name="Ravel J."/>
            <person name="Cebula T.A."/>
        </authorList>
    </citation>
    <scope>NUCLEOTIDE SEQUENCE [LARGE SCALE GENOMIC DNA]</scope>
    <source>
        <strain>SL254</strain>
    </source>
</reference>
<organism>
    <name type="scientific">Salmonella newport (strain SL254)</name>
    <dbReference type="NCBI Taxonomy" id="423368"/>
    <lineage>
        <taxon>Bacteria</taxon>
        <taxon>Pseudomonadati</taxon>
        <taxon>Pseudomonadota</taxon>
        <taxon>Gammaproteobacteria</taxon>
        <taxon>Enterobacterales</taxon>
        <taxon>Enterobacteriaceae</taxon>
        <taxon>Salmonella</taxon>
    </lineage>
</organism>
<evidence type="ECO:0000255" key="1">
    <source>
        <dbReference type="HAMAP-Rule" id="MF_01618"/>
    </source>
</evidence>
<name>FADI_SALNS</name>